<gene>
    <name evidence="1" type="primary">aroB</name>
    <name type="ordered locus">MW1355</name>
</gene>
<name>AROB_STAAW</name>
<feature type="chain" id="PRO_0000140784" description="3-dehydroquinate synthase">
    <location>
        <begin position="1"/>
        <end position="354"/>
    </location>
</feature>
<feature type="binding site" evidence="1">
    <location>
        <begin position="100"/>
        <end position="104"/>
    </location>
    <ligand>
        <name>NAD(+)</name>
        <dbReference type="ChEBI" id="CHEBI:57540"/>
    </ligand>
</feature>
<feature type="binding site" evidence="1">
    <location>
        <begin position="124"/>
        <end position="125"/>
    </location>
    <ligand>
        <name>NAD(+)</name>
        <dbReference type="ChEBI" id="CHEBI:57540"/>
    </ligand>
</feature>
<feature type="binding site" evidence="1">
    <location>
        <position position="136"/>
    </location>
    <ligand>
        <name>NAD(+)</name>
        <dbReference type="ChEBI" id="CHEBI:57540"/>
    </ligand>
</feature>
<feature type="binding site" evidence="1">
    <location>
        <position position="145"/>
    </location>
    <ligand>
        <name>NAD(+)</name>
        <dbReference type="ChEBI" id="CHEBI:57540"/>
    </ligand>
</feature>
<feature type="binding site" evidence="1">
    <location>
        <begin position="163"/>
        <end position="166"/>
    </location>
    <ligand>
        <name>NAD(+)</name>
        <dbReference type="ChEBI" id="CHEBI:57540"/>
    </ligand>
</feature>
<feature type="binding site" evidence="1">
    <location>
        <position position="178"/>
    </location>
    <ligand>
        <name>Zn(2+)</name>
        <dbReference type="ChEBI" id="CHEBI:29105"/>
    </ligand>
</feature>
<feature type="binding site" evidence="1">
    <location>
        <position position="242"/>
    </location>
    <ligand>
        <name>Zn(2+)</name>
        <dbReference type="ChEBI" id="CHEBI:29105"/>
    </ligand>
</feature>
<feature type="binding site" evidence="1">
    <location>
        <position position="256"/>
    </location>
    <ligand>
        <name>Zn(2+)</name>
        <dbReference type="ChEBI" id="CHEBI:29105"/>
    </ligand>
</feature>
<comment type="function">
    <text evidence="1">Catalyzes the conversion of 3-deoxy-D-arabino-heptulosonate 7-phosphate (DAHP) to dehydroquinate (DHQ).</text>
</comment>
<comment type="catalytic activity">
    <reaction evidence="1">
        <text>7-phospho-2-dehydro-3-deoxy-D-arabino-heptonate = 3-dehydroquinate + phosphate</text>
        <dbReference type="Rhea" id="RHEA:21968"/>
        <dbReference type="ChEBI" id="CHEBI:32364"/>
        <dbReference type="ChEBI" id="CHEBI:43474"/>
        <dbReference type="ChEBI" id="CHEBI:58394"/>
        <dbReference type="EC" id="4.2.3.4"/>
    </reaction>
</comment>
<comment type="cofactor">
    <cofactor evidence="1">
        <name>NAD(+)</name>
        <dbReference type="ChEBI" id="CHEBI:57540"/>
    </cofactor>
</comment>
<comment type="cofactor">
    <cofactor evidence="1">
        <name>Co(2+)</name>
        <dbReference type="ChEBI" id="CHEBI:48828"/>
    </cofactor>
    <cofactor evidence="1">
        <name>Zn(2+)</name>
        <dbReference type="ChEBI" id="CHEBI:29105"/>
    </cofactor>
    <text evidence="1">Binds 1 divalent metal cation per subunit. Can use either Co(2+) or Zn(2+).</text>
</comment>
<comment type="pathway">
    <text evidence="1">Metabolic intermediate biosynthesis; chorismate biosynthesis; chorismate from D-erythrose 4-phosphate and phosphoenolpyruvate: step 2/7.</text>
</comment>
<comment type="subcellular location">
    <subcellularLocation>
        <location evidence="1">Cytoplasm</location>
    </subcellularLocation>
</comment>
<comment type="similarity">
    <text evidence="1">Belongs to the sugar phosphate cyclases superfamily. Dehydroquinate synthase family.</text>
</comment>
<accession>Q8NWN4</accession>
<sequence>MKLQTTYPSNNYPIYVERGAIDHISTYIDQFDQSFILIDEYVNQYFANKFDDILSYENVHKVIIPAGEKTKTFHQYQETLEYILSHHVTRNTAIIAVGGGATGDFAGFVAATLLRGVHFIQVPTTILAHDSSVGGKVGINSKQGKNLIGAFYRPTAVIYDLDFLKTLPFEQILSGYAEVYKHALLNGESTTQEIEQHFKDREILQSLNGMDKYIAKGIETKLDIVVADEKEQGVRKFLNLGHTFGHAVEYYHKIPHGHAVMVGIIYQFIVANALFDSKHEINHYIQYLIQLGYPLDMITDLDFETLYEYMLSDKKNDKQGVQMVLIRQFGDIVVQHVDQLTLQHACEQLKTYFK</sequence>
<dbReference type="EC" id="4.2.3.4" evidence="1"/>
<dbReference type="EMBL" id="BA000033">
    <property type="protein sequence ID" value="BAB95220.1"/>
    <property type="molecule type" value="Genomic_DNA"/>
</dbReference>
<dbReference type="RefSeq" id="WP_000776341.1">
    <property type="nucleotide sequence ID" value="NC_003923.1"/>
</dbReference>
<dbReference type="SMR" id="Q8NWN4"/>
<dbReference type="KEGG" id="sam:MW1355"/>
<dbReference type="HOGENOM" id="CLU_001201_0_1_9"/>
<dbReference type="UniPathway" id="UPA00053">
    <property type="reaction ID" value="UER00085"/>
</dbReference>
<dbReference type="GO" id="GO:0005737">
    <property type="term" value="C:cytoplasm"/>
    <property type="evidence" value="ECO:0007669"/>
    <property type="project" value="UniProtKB-SubCell"/>
</dbReference>
<dbReference type="GO" id="GO:0003856">
    <property type="term" value="F:3-dehydroquinate synthase activity"/>
    <property type="evidence" value="ECO:0007669"/>
    <property type="project" value="UniProtKB-UniRule"/>
</dbReference>
<dbReference type="GO" id="GO:0046872">
    <property type="term" value="F:metal ion binding"/>
    <property type="evidence" value="ECO:0007669"/>
    <property type="project" value="UniProtKB-KW"/>
</dbReference>
<dbReference type="GO" id="GO:0000166">
    <property type="term" value="F:nucleotide binding"/>
    <property type="evidence" value="ECO:0007669"/>
    <property type="project" value="UniProtKB-KW"/>
</dbReference>
<dbReference type="GO" id="GO:0008652">
    <property type="term" value="P:amino acid biosynthetic process"/>
    <property type="evidence" value="ECO:0007669"/>
    <property type="project" value="UniProtKB-KW"/>
</dbReference>
<dbReference type="GO" id="GO:0009073">
    <property type="term" value="P:aromatic amino acid family biosynthetic process"/>
    <property type="evidence" value="ECO:0007669"/>
    <property type="project" value="UniProtKB-KW"/>
</dbReference>
<dbReference type="GO" id="GO:0009423">
    <property type="term" value="P:chorismate biosynthetic process"/>
    <property type="evidence" value="ECO:0007669"/>
    <property type="project" value="UniProtKB-UniRule"/>
</dbReference>
<dbReference type="CDD" id="cd08169">
    <property type="entry name" value="DHQ-like"/>
    <property type="match status" value="1"/>
</dbReference>
<dbReference type="FunFam" id="3.40.50.1970:FF:000019">
    <property type="entry name" value="3-dehydroquinate synthase"/>
    <property type="match status" value="1"/>
</dbReference>
<dbReference type="Gene3D" id="3.40.50.1970">
    <property type="match status" value="1"/>
</dbReference>
<dbReference type="Gene3D" id="1.20.1090.10">
    <property type="entry name" value="Dehydroquinate synthase-like - alpha domain"/>
    <property type="match status" value="1"/>
</dbReference>
<dbReference type="HAMAP" id="MF_00110">
    <property type="entry name" value="DHQ_synthase"/>
    <property type="match status" value="1"/>
</dbReference>
<dbReference type="InterPro" id="IPR050071">
    <property type="entry name" value="Dehydroquinate_synthase"/>
</dbReference>
<dbReference type="InterPro" id="IPR016037">
    <property type="entry name" value="DHQ_synth_AroB"/>
</dbReference>
<dbReference type="InterPro" id="IPR030963">
    <property type="entry name" value="DHQ_synth_fam"/>
</dbReference>
<dbReference type="InterPro" id="IPR030960">
    <property type="entry name" value="DHQS/DOIS_N"/>
</dbReference>
<dbReference type="InterPro" id="IPR056179">
    <property type="entry name" value="DHQS_C"/>
</dbReference>
<dbReference type="NCBIfam" id="TIGR01357">
    <property type="entry name" value="aroB"/>
    <property type="match status" value="1"/>
</dbReference>
<dbReference type="PANTHER" id="PTHR43622">
    <property type="entry name" value="3-DEHYDROQUINATE SYNTHASE"/>
    <property type="match status" value="1"/>
</dbReference>
<dbReference type="PANTHER" id="PTHR43622:SF7">
    <property type="entry name" value="3-DEHYDROQUINATE SYNTHASE, CHLOROPLASTIC"/>
    <property type="match status" value="1"/>
</dbReference>
<dbReference type="Pfam" id="PF01761">
    <property type="entry name" value="DHQ_synthase"/>
    <property type="match status" value="1"/>
</dbReference>
<dbReference type="Pfam" id="PF24621">
    <property type="entry name" value="DHQS_C"/>
    <property type="match status" value="1"/>
</dbReference>
<dbReference type="PIRSF" id="PIRSF001455">
    <property type="entry name" value="DHQ_synth"/>
    <property type="match status" value="1"/>
</dbReference>
<dbReference type="SUPFAM" id="SSF56796">
    <property type="entry name" value="Dehydroquinate synthase-like"/>
    <property type="match status" value="1"/>
</dbReference>
<keyword id="KW-0028">Amino-acid biosynthesis</keyword>
<keyword id="KW-0057">Aromatic amino acid biosynthesis</keyword>
<keyword id="KW-0170">Cobalt</keyword>
<keyword id="KW-0963">Cytoplasm</keyword>
<keyword id="KW-0456">Lyase</keyword>
<keyword id="KW-0479">Metal-binding</keyword>
<keyword id="KW-0520">NAD</keyword>
<keyword id="KW-0547">Nucleotide-binding</keyword>
<keyword id="KW-0862">Zinc</keyword>
<proteinExistence type="inferred from homology"/>
<evidence type="ECO:0000255" key="1">
    <source>
        <dbReference type="HAMAP-Rule" id="MF_00110"/>
    </source>
</evidence>
<organism>
    <name type="scientific">Staphylococcus aureus (strain MW2)</name>
    <dbReference type="NCBI Taxonomy" id="196620"/>
    <lineage>
        <taxon>Bacteria</taxon>
        <taxon>Bacillati</taxon>
        <taxon>Bacillota</taxon>
        <taxon>Bacilli</taxon>
        <taxon>Bacillales</taxon>
        <taxon>Staphylococcaceae</taxon>
        <taxon>Staphylococcus</taxon>
    </lineage>
</organism>
<reference key="1">
    <citation type="journal article" date="2002" name="Lancet">
        <title>Genome and virulence determinants of high virulence community-acquired MRSA.</title>
        <authorList>
            <person name="Baba T."/>
            <person name="Takeuchi F."/>
            <person name="Kuroda M."/>
            <person name="Yuzawa H."/>
            <person name="Aoki K."/>
            <person name="Oguchi A."/>
            <person name="Nagai Y."/>
            <person name="Iwama N."/>
            <person name="Asano K."/>
            <person name="Naimi T."/>
            <person name="Kuroda H."/>
            <person name="Cui L."/>
            <person name="Yamamoto K."/>
            <person name="Hiramatsu K."/>
        </authorList>
    </citation>
    <scope>NUCLEOTIDE SEQUENCE [LARGE SCALE GENOMIC DNA]</scope>
    <source>
        <strain>MW2</strain>
    </source>
</reference>
<protein>
    <recommendedName>
        <fullName evidence="1">3-dehydroquinate synthase</fullName>
        <shortName evidence="1">DHQS</shortName>
        <ecNumber evidence="1">4.2.3.4</ecNumber>
    </recommendedName>
</protein>